<protein>
    <recommendedName>
        <fullName evidence="1">Bifunctional protein GlmU</fullName>
    </recommendedName>
    <domain>
        <recommendedName>
            <fullName evidence="1">UDP-N-acetylglucosamine pyrophosphorylase</fullName>
            <ecNumber evidence="1">2.7.7.23</ecNumber>
        </recommendedName>
        <alternativeName>
            <fullName evidence="1">N-acetylglucosamine-1-phosphate uridyltransferase</fullName>
        </alternativeName>
    </domain>
    <domain>
        <recommendedName>
            <fullName evidence="1">Glucosamine-1-phosphate N-acetyltransferase</fullName>
            <ecNumber evidence="1">2.3.1.157</ecNumber>
        </recommendedName>
    </domain>
</protein>
<reference key="1">
    <citation type="submission" date="2006-12" db="EMBL/GenBank/DDBJ databases">
        <title>Complete sequence of Halorhodospira halophila SL1.</title>
        <authorList>
            <consortium name="US DOE Joint Genome Institute"/>
            <person name="Copeland A."/>
            <person name="Lucas S."/>
            <person name="Lapidus A."/>
            <person name="Barry K."/>
            <person name="Detter J.C."/>
            <person name="Glavina del Rio T."/>
            <person name="Hammon N."/>
            <person name="Israni S."/>
            <person name="Dalin E."/>
            <person name="Tice H."/>
            <person name="Pitluck S."/>
            <person name="Saunders E."/>
            <person name="Brettin T."/>
            <person name="Bruce D."/>
            <person name="Han C."/>
            <person name="Tapia R."/>
            <person name="Schmutz J."/>
            <person name="Larimer F."/>
            <person name="Land M."/>
            <person name="Hauser L."/>
            <person name="Kyrpides N."/>
            <person name="Mikhailova N."/>
            <person name="Hoff W."/>
            <person name="Richardson P."/>
        </authorList>
    </citation>
    <scope>NUCLEOTIDE SEQUENCE [LARGE SCALE GENOMIC DNA]</scope>
    <source>
        <strain>DSM 244 / SL1</strain>
    </source>
</reference>
<comment type="function">
    <text evidence="1">Catalyzes the last two sequential reactions in the de novo biosynthetic pathway for UDP-N-acetylglucosamine (UDP-GlcNAc). The C-terminal domain catalyzes the transfer of acetyl group from acetyl coenzyme A to glucosamine-1-phosphate (GlcN-1-P) to produce N-acetylglucosamine-1-phosphate (GlcNAc-1-P), which is converted into UDP-GlcNAc by the transfer of uridine 5-monophosphate (from uridine 5-triphosphate), a reaction catalyzed by the N-terminal domain.</text>
</comment>
<comment type="catalytic activity">
    <reaction evidence="1">
        <text>alpha-D-glucosamine 1-phosphate + acetyl-CoA = N-acetyl-alpha-D-glucosamine 1-phosphate + CoA + H(+)</text>
        <dbReference type="Rhea" id="RHEA:13725"/>
        <dbReference type="ChEBI" id="CHEBI:15378"/>
        <dbReference type="ChEBI" id="CHEBI:57287"/>
        <dbReference type="ChEBI" id="CHEBI:57288"/>
        <dbReference type="ChEBI" id="CHEBI:57776"/>
        <dbReference type="ChEBI" id="CHEBI:58516"/>
        <dbReference type="EC" id="2.3.1.157"/>
    </reaction>
</comment>
<comment type="catalytic activity">
    <reaction evidence="1">
        <text>N-acetyl-alpha-D-glucosamine 1-phosphate + UTP + H(+) = UDP-N-acetyl-alpha-D-glucosamine + diphosphate</text>
        <dbReference type="Rhea" id="RHEA:13509"/>
        <dbReference type="ChEBI" id="CHEBI:15378"/>
        <dbReference type="ChEBI" id="CHEBI:33019"/>
        <dbReference type="ChEBI" id="CHEBI:46398"/>
        <dbReference type="ChEBI" id="CHEBI:57705"/>
        <dbReference type="ChEBI" id="CHEBI:57776"/>
        <dbReference type="EC" id="2.7.7.23"/>
    </reaction>
</comment>
<comment type="cofactor">
    <cofactor evidence="1">
        <name>Mg(2+)</name>
        <dbReference type="ChEBI" id="CHEBI:18420"/>
    </cofactor>
    <text evidence="1">Binds 1 Mg(2+) ion per subunit.</text>
</comment>
<comment type="pathway">
    <text evidence="1">Nucleotide-sugar biosynthesis; UDP-N-acetyl-alpha-D-glucosamine biosynthesis; N-acetyl-alpha-D-glucosamine 1-phosphate from alpha-D-glucosamine 6-phosphate (route II): step 2/2.</text>
</comment>
<comment type="pathway">
    <text evidence="1">Nucleotide-sugar biosynthesis; UDP-N-acetyl-alpha-D-glucosamine biosynthesis; UDP-N-acetyl-alpha-D-glucosamine from N-acetyl-alpha-D-glucosamine 1-phosphate: step 1/1.</text>
</comment>
<comment type="pathway">
    <text evidence="1">Bacterial outer membrane biogenesis; LPS lipid A biosynthesis.</text>
</comment>
<comment type="subunit">
    <text evidence="1">Homotrimer.</text>
</comment>
<comment type="subcellular location">
    <subcellularLocation>
        <location evidence="1">Cytoplasm</location>
    </subcellularLocation>
</comment>
<comment type="similarity">
    <text evidence="1">In the N-terminal section; belongs to the N-acetylglucosamine-1-phosphate uridyltransferase family.</text>
</comment>
<comment type="similarity">
    <text evidence="1">In the C-terminal section; belongs to the transferase hexapeptide repeat family.</text>
</comment>
<organism>
    <name type="scientific">Halorhodospira halophila (strain DSM 244 / SL1)</name>
    <name type="common">Ectothiorhodospira halophila (strain DSM 244 / SL1)</name>
    <dbReference type="NCBI Taxonomy" id="349124"/>
    <lineage>
        <taxon>Bacteria</taxon>
        <taxon>Pseudomonadati</taxon>
        <taxon>Pseudomonadota</taxon>
        <taxon>Gammaproteobacteria</taxon>
        <taxon>Chromatiales</taxon>
        <taxon>Ectothiorhodospiraceae</taxon>
        <taxon>Halorhodospira</taxon>
    </lineage>
</organism>
<keyword id="KW-0012">Acyltransferase</keyword>
<keyword id="KW-0133">Cell shape</keyword>
<keyword id="KW-0961">Cell wall biogenesis/degradation</keyword>
<keyword id="KW-0963">Cytoplasm</keyword>
<keyword id="KW-0460">Magnesium</keyword>
<keyword id="KW-0479">Metal-binding</keyword>
<keyword id="KW-0511">Multifunctional enzyme</keyword>
<keyword id="KW-0548">Nucleotidyltransferase</keyword>
<keyword id="KW-0573">Peptidoglycan synthesis</keyword>
<keyword id="KW-1185">Reference proteome</keyword>
<keyword id="KW-0677">Repeat</keyword>
<keyword id="KW-0808">Transferase</keyword>
<proteinExistence type="inferred from homology"/>
<gene>
    <name evidence="1" type="primary">glmU</name>
    <name type="ordered locus">Hhal_2428</name>
</gene>
<accession>A1WZS9</accession>
<sequence length="473" mass="49473">MRAPVAVVILAAGKGTRMRSAQPKVLQPLAGRPLLAHVLDTALALGPEQVHVVYGHGGDQVAAAHADYPVYWVEQPRQLGTGHAVACALPQIPDDHRVLVLYGDVPLVTPETLKPLLAGDGLELLAARVPDPTGYGRIIRDDDGAVVAIVEEKDADPEQRRVDEVNTGLLAASAGDLRRWMAALSADNAQGEYYLTDAVAAARADGTPVRARFTSEAGEASGINDLVQLAEVEEAFQRRWARRLLQGGLRLVAPHRFTLRGAVRHGTDCAVDADCTLEGEVQLGHGVQVGQGVILRDCVIEDGAQVGPYTVVEQAHIGAGCRVGPFAHLRPGTVLEEGARVGNFVETKAARLGPGAKANHLTYVGDAEVGARANLGAGTITCNYDGAEKHRTQIGEDAFIGSGSQLVAPVQVGARATIGAGTTLTSDAPADALTVGRSRARTIPGWQHPGLTGRRGPPDDNDATPASGGAKEE</sequence>
<name>GLMU_HALHL</name>
<evidence type="ECO:0000255" key="1">
    <source>
        <dbReference type="HAMAP-Rule" id="MF_01631"/>
    </source>
</evidence>
<evidence type="ECO:0000256" key="2">
    <source>
        <dbReference type="SAM" id="MobiDB-lite"/>
    </source>
</evidence>
<feature type="chain" id="PRO_1000056162" description="Bifunctional protein GlmU">
    <location>
        <begin position="1"/>
        <end position="473"/>
    </location>
</feature>
<feature type="region of interest" description="Pyrophosphorylase" evidence="1">
    <location>
        <begin position="1"/>
        <end position="226"/>
    </location>
</feature>
<feature type="region of interest" description="Linker" evidence="1">
    <location>
        <begin position="227"/>
        <end position="247"/>
    </location>
</feature>
<feature type="region of interest" description="N-acetyltransferase" evidence="1">
    <location>
        <begin position="248"/>
        <end position="473"/>
    </location>
</feature>
<feature type="region of interest" description="Disordered" evidence="2">
    <location>
        <begin position="439"/>
        <end position="473"/>
    </location>
</feature>
<feature type="active site" description="Proton acceptor" evidence="1">
    <location>
        <position position="360"/>
    </location>
</feature>
<feature type="binding site" evidence="1">
    <location>
        <begin position="10"/>
        <end position="13"/>
    </location>
    <ligand>
        <name>UDP-N-acetyl-alpha-D-glucosamine</name>
        <dbReference type="ChEBI" id="CHEBI:57705"/>
    </ligand>
</feature>
<feature type="binding site" evidence="1">
    <location>
        <position position="24"/>
    </location>
    <ligand>
        <name>UDP-N-acetyl-alpha-D-glucosamine</name>
        <dbReference type="ChEBI" id="CHEBI:57705"/>
    </ligand>
</feature>
<feature type="binding site" evidence="1">
    <location>
        <position position="75"/>
    </location>
    <ligand>
        <name>UDP-N-acetyl-alpha-D-glucosamine</name>
        <dbReference type="ChEBI" id="CHEBI:57705"/>
    </ligand>
</feature>
<feature type="binding site" evidence="1">
    <location>
        <begin position="80"/>
        <end position="81"/>
    </location>
    <ligand>
        <name>UDP-N-acetyl-alpha-D-glucosamine</name>
        <dbReference type="ChEBI" id="CHEBI:57705"/>
    </ligand>
</feature>
<feature type="binding site" evidence="1">
    <location>
        <begin position="102"/>
        <end position="104"/>
    </location>
    <ligand>
        <name>UDP-N-acetyl-alpha-D-glucosamine</name>
        <dbReference type="ChEBI" id="CHEBI:57705"/>
    </ligand>
</feature>
<feature type="binding site" evidence="1">
    <location>
        <position position="104"/>
    </location>
    <ligand>
        <name>Mg(2+)</name>
        <dbReference type="ChEBI" id="CHEBI:18420"/>
    </ligand>
</feature>
<feature type="binding site" evidence="1">
    <location>
        <position position="136"/>
    </location>
    <ligand>
        <name>UDP-N-acetyl-alpha-D-glucosamine</name>
        <dbReference type="ChEBI" id="CHEBI:57705"/>
    </ligand>
</feature>
<feature type="binding site" evidence="1">
    <location>
        <position position="151"/>
    </location>
    <ligand>
        <name>UDP-N-acetyl-alpha-D-glucosamine</name>
        <dbReference type="ChEBI" id="CHEBI:57705"/>
    </ligand>
</feature>
<feature type="binding site" evidence="1">
    <location>
        <position position="166"/>
    </location>
    <ligand>
        <name>UDP-N-acetyl-alpha-D-glucosamine</name>
        <dbReference type="ChEBI" id="CHEBI:57705"/>
    </ligand>
</feature>
<feature type="binding site" evidence="1">
    <location>
        <position position="224"/>
    </location>
    <ligand>
        <name>Mg(2+)</name>
        <dbReference type="ChEBI" id="CHEBI:18420"/>
    </ligand>
</feature>
<feature type="binding site" evidence="1">
    <location>
        <position position="224"/>
    </location>
    <ligand>
        <name>UDP-N-acetyl-alpha-D-glucosamine</name>
        <dbReference type="ChEBI" id="CHEBI:57705"/>
    </ligand>
</feature>
<feature type="binding site" evidence="1">
    <location>
        <position position="330"/>
    </location>
    <ligand>
        <name>UDP-N-acetyl-alpha-D-glucosamine</name>
        <dbReference type="ChEBI" id="CHEBI:57705"/>
    </ligand>
</feature>
<feature type="binding site" evidence="1">
    <location>
        <position position="348"/>
    </location>
    <ligand>
        <name>UDP-N-acetyl-alpha-D-glucosamine</name>
        <dbReference type="ChEBI" id="CHEBI:57705"/>
    </ligand>
</feature>
<feature type="binding site" evidence="1">
    <location>
        <position position="363"/>
    </location>
    <ligand>
        <name>UDP-N-acetyl-alpha-D-glucosamine</name>
        <dbReference type="ChEBI" id="CHEBI:57705"/>
    </ligand>
</feature>
<feature type="binding site" evidence="1">
    <location>
        <position position="374"/>
    </location>
    <ligand>
        <name>UDP-N-acetyl-alpha-D-glucosamine</name>
        <dbReference type="ChEBI" id="CHEBI:57705"/>
    </ligand>
</feature>
<feature type="binding site" evidence="1">
    <location>
        <position position="377"/>
    </location>
    <ligand>
        <name>acetyl-CoA</name>
        <dbReference type="ChEBI" id="CHEBI:57288"/>
    </ligand>
</feature>
<feature type="binding site" evidence="1">
    <location>
        <begin position="383"/>
        <end position="384"/>
    </location>
    <ligand>
        <name>acetyl-CoA</name>
        <dbReference type="ChEBI" id="CHEBI:57288"/>
    </ligand>
</feature>
<feature type="binding site" evidence="1">
    <location>
        <position position="402"/>
    </location>
    <ligand>
        <name>acetyl-CoA</name>
        <dbReference type="ChEBI" id="CHEBI:57288"/>
    </ligand>
</feature>
<feature type="binding site" evidence="1">
    <location>
        <position position="420"/>
    </location>
    <ligand>
        <name>acetyl-CoA</name>
        <dbReference type="ChEBI" id="CHEBI:57288"/>
    </ligand>
</feature>
<feature type="binding site" evidence="1">
    <location>
        <position position="437"/>
    </location>
    <ligand>
        <name>acetyl-CoA</name>
        <dbReference type="ChEBI" id="CHEBI:57288"/>
    </ligand>
</feature>
<dbReference type="EC" id="2.7.7.23" evidence="1"/>
<dbReference type="EC" id="2.3.1.157" evidence="1"/>
<dbReference type="EMBL" id="CP000544">
    <property type="protein sequence ID" value="ABM63191.1"/>
    <property type="molecule type" value="Genomic_DNA"/>
</dbReference>
<dbReference type="RefSeq" id="WP_011815213.1">
    <property type="nucleotide sequence ID" value="NC_008789.1"/>
</dbReference>
<dbReference type="SMR" id="A1WZS9"/>
<dbReference type="STRING" id="349124.Hhal_2428"/>
<dbReference type="KEGG" id="hha:Hhal_2428"/>
<dbReference type="eggNOG" id="COG1207">
    <property type="taxonomic scope" value="Bacteria"/>
</dbReference>
<dbReference type="HOGENOM" id="CLU_029499_15_2_6"/>
<dbReference type="OrthoDB" id="9775031at2"/>
<dbReference type="UniPathway" id="UPA00113">
    <property type="reaction ID" value="UER00532"/>
</dbReference>
<dbReference type="UniPathway" id="UPA00113">
    <property type="reaction ID" value="UER00533"/>
</dbReference>
<dbReference type="UniPathway" id="UPA00973"/>
<dbReference type="Proteomes" id="UP000000647">
    <property type="component" value="Chromosome"/>
</dbReference>
<dbReference type="GO" id="GO:0005737">
    <property type="term" value="C:cytoplasm"/>
    <property type="evidence" value="ECO:0007669"/>
    <property type="project" value="UniProtKB-SubCell"/>
</dbReference>
<dbReference type="GO" id="GO:0016020">
    <property type="term" value="C:membrane"/>
    <property type="evidence" value="ECO:0007669"/>
    <property type="project" value="GOC"/>
</dbReference>
<dbReference type="GO" id="GO:0019134">
    <property type="term" value="F:glucosamine-1-phosphate N-acetyltransferase activity"/>
    <property type="evidence" value="ECO:0007669"/>
    <property type="project" value="UniProtKB-UniRule"/>
</dbReference>
<dbReference type="GO" id="GO:0000287">
    <property type="term" value="F:magnesium ion binding"/>
    <property type="evidence" value="ECO:0007669"/>
    <property type="project" value="UniProtKB-UniRule"/>
</dbReference>
<dbReference type="GO" id="GO:0003977">
    <property type="term" value="F:UDP-N-acetylglucosamine diphosphorylase activity"/>
    <property type="evidence" value="ECO:0007669"/>
    <property type="project" value="UniProtKB-UniRule"/>
</dbReference>
<dbReference type="GO" id="GO:0000902">
    <property type="term" value="P:cell morphogenesis"/>
    <property type="evidence" value="ECO:0007669"/>
    <property type="project" value="UniProtKB-UniRule"/>
</dbReference>
<dbReference type="GO" id="GO:0071555">
    <property type="term" value="P:cell wall organization"/>
    <property type="evidence" value="ECO:0007669"/>
    <property type="project" value="UniProtKB-KW"/>
</dbReference>
<dbReference type="GO" id="GO:0009245">
    <property type="term" value="P:lipid A biosynthetic process"/>
    <property type="evidence" value="ECO:0007669"/>
    <property type="project" value="UniProtKB-UniRule"/>
</dbReference>
<dbReference type="GO" id="GO:0009252">
    <property type="term" value="P:peptidoglycan biosynthetic process"/>
    <property type="evidence" value="ECO:0007669"/>
    <property type="project" value="UniProtKB-UniRule"/>
</dbReference>
<dbReference type="GO" id="GO:0008360">
    <property type="term" value="P:regulation of cell shape"/>
    <property type="evidence" value="ECO:0007669"/>
    <property type="project" value="UniProtKB-KW"/>
</dbReference>
<dbReference type="GO" id="GO:0006048">
    <property type="term" value="P:UDP-N-acetylglucosamine biosynthetic process"/>
    <property type="evidence" value="ECO:0007669"/>
    <property type="project" value="UniProtKB-UniPathway"/>
</dbReference>
<dbReference type="CDD" id="cd02540">
    <property type="entry name" value="GT2_GlmU_N_bac"/>
    <property type="match status" value="1"/>
</dbReference>
<dbReference type="CDD" id="cd03353">
    <property type="entry name" value="LbH_GlmU_C"/>
    <property type="match status" value="1"/>
</dbReference>
<dbReference type="Gene3D" id="2.160.10.10">
    <property type="entry name" value="Hexapeptide repeat proteins"/>
    <property type="match status" value="1"/>
</dbReference>
<dbReference type="Gene3D" id="3.90.550.10">
    <property type="entry name" value="Spore Coat Polysaccharide Biosynthesis Protein SpsA, Chain A"/>
    <property type="match status" value="1"/>
</dbReference>
<dbReference type="HAMAP" id="MF_01631">
    <property type="entry name" value="GlmU"/>
    <property type="match status" value="1"/>
</dbReference>
<dbReference type="InterPro" id="IPR005882">
    <property type="entry name" value="Bifunctional_GlmU"/>
</dbReference>
<dbReference type="InterPro" id="IPR050065">
    <property type="entry name" value="GlmU-like"/>
</dbReference>
<dbReference type="InterPro" id="IPR038009">
    <property type="entry name" value="GlmU_C_LbH"/>
</dbReference>
<dbReference type="InterPro" id="IPR001451">
    <property type="entry name" value="Hexapep"/>
</dbReference>
<dbReference type="InterPro" id="IPR025877">
    <property type="entry name" value="MobA-like_NTP_Trfase"/>
</dbReference>
<dbReference type="InterPro" id="IPR029044">
    <property type="entry name" value="Nucleotide-diphossugar_trans"/>
</dbReference>
<dbReference type="InterPro" id="IPR011004">
    <property type="entry name" value="Trimer_LpxA-like_sf"/>
</dbReference>
<dbReference type="NCBIfam" id="TIGR01173">
    <property type="entry name" value="glmU"/>
    <property type="match status" value="1"/>
</dbReference>
<dbReference type="PANTHER" id="PTHR43584:SF3">
    <property type="entry name" value="BIFUNCTIONAL PROTEIN GLMU"/>
    <property type="match status" value="1"/>
</dbReference>
<dbReference type="PANTHER" id="PTHR43584">
    <property type="entry name" value="NUCLEOTIDYL TRANSFERASE"/>
    <property type="match status" value="1"/>
</dbReference>
<dbReference type="Pfam" id="PF00132">
    <property type="entry name" value="Hexapep"/>
    <property type="match status" value="2"/>
</dbReference>
<dbReference type="Pfam" id="PF12804">
    <property type="entry name" value="NTP_transf_3"/>
    <property type="match status" value="1"/>
</dbReference>
<dbReference type="SUPFAM" id="SSF53448">
    <property type="entry name" value="Nucleotide-diphospho-sugar transferases"/>
    <property type="match status" value="1"/>
</dbReference>
<dbReference type="SUPFAM" id="SSF51161">
    <property type="entry name" value="Trimeric LpxA-like enzymes"/>
    <property type="match status" value="1"/>
</dbReference>